<keyword id="KW-0004">4Fe-4S</keyword>
<keyword id="KW-0408">Iron</keyword>
<keyword id="KW-0411">Iron-sulfur</keyword>
<keyword id="KW-0414">Isoprene biosynthesis</keyword>
<keyword id="KW-0479">Metal-binding</keyword>
<keyword id="KW-0560">Oxidoreductase</keyword>
<gene>
    <name evidence="1" type="primary">ispG</name>
    <name type="ordered locus">C8J_0654</name>
</gene>
<feature type="chain" id="PRO_1000071539" description="4-hydroxy-3-methylbut-2-en-1-yl diphosphate synthase (flavodoxin)">
    <location>
        <begin position="1"/>
        <end position="357"/>
    </location>
</feature>
<feature type="binding site" evidence="1">
    <location>
        <position position="264"/>
    </location>
    <ligand>
        <name>[4Fe-4S] cluster</name>
        <dbReference type="ChEBI" id="CHEBI:49883"/>
    </ligand>
</feature>
<feature type="binding site" evidence="1">
    <location>
        <position position="267"/>
    </location>
    <ligand>
        <name>[4Fe-4S] cluster</name>
        <dbReference type="ChEBI" id="CHEBI:49883"/>
    </ligand>
</feature>
<feature type="binding site" evidence="1">
    <location>
        <position position="299"/>
    </location>
    <ligand>
        <name>[4Fe-4S] cluster</name>
        <dbReference type="ChEBI" id="CHEBI:49883"/>
    </ligand>
</feature>
<feature type="binding site" evidence="1">
    <location>
        <position position="306"/>
    </location>
    <ligand>
        <name>[4Fe-4S] cluster</name>
        <dbReference type="ChEBI" id="CHEBI:49883"/>
    </ligand>
</feature>
<proteinExistence type="inferred from homology"/>
<name>ISPG_CAMJ8</name>
<accession>A8FLB6</accession>
<reference key="1">
    <citation type="journal article" date="2007" name="J. Bacteriol.">
        <title>The complete genome sequence of Campylobacter jejuni strain 81116 (NCTC11828).</title>
        <authorList>
            <person name="Pearson B.M."/>
            <person name="Gaskin D.J.H."/>
            <person name="Segers R.P.A.M."/>
            <person name="Wells J.M."/>
            <person name="Nuijten P.J.M."/>
            <person name="van Vliet A.H.M."/>
        </authorList>
    </citation>
    <scope>NUCLEOTIDE SEQUENCE [LARGE SCALE GENOMIC DNA]</scope>
    <source>
        <strain>81116 / NCTC 11828</strain>
    </source>
</reference>
<sequence>MEYKRFKTRQIKVGNVSIGGDAPISVQSMLFTKTRDIEGSLEQISRLYFAGANIVRLACLDMADARALKEIKAKSPLPLIVDIHFNHNLAVYCAEFIDGVRINPGNIGSKENIKEVVKACKERGIPIRIGVNHGSIEKQFSDKFGYGVDAMLESAMYNIKLLEDLDFFDIKISMKTSDAQKTIEAYERLRPLCDYPFHLGVTEAGTKFHSTVKSSIALGNLLLKGIGDTMRVSMTGELEEEIRVARAILQDSGVQKSGVNIISCPTCGRIQSDLLSAIKIVEEKTKHIKEPLNISVMGCVVNALGEAKGADVAIAFGKNQGLVIRHGEVVAKLKESELVDRFLAEVEDEVKSRAVKE</sequence>
<protein>
    <recommendedName>
        <fullName evidence="1">4-hydroxy-3-methylbut-2-en-1-yl diphosphate synthase (flavodoxin)</fullName>
        <ecNumber evidence="1">1.17.7.3</ecNumber>
    </recommendedName>
    <alternativeName>
        <fullName evidence="1">1-hydroxy-2-methyl-2-(E)-butenyl 4-diphosphate synthase</fullName>
    </alternativeName>
</protein>
<evidence type="ECO:0000255" key="1">
    <source>
        <dbReference type="HAMAP-Rule" id="MF_00159"/>
    </source>
</evidence>
<comment type="function">
    <text evidence="1">Converts 2C-methyl-D-erythritol 2,4-cyclodiphosphate (ME-2,4cPP) into 1-hydroxy-2-methyl-2-(E)-butenyl 4-diphosphate.</text>
</comment>
<comment type="catalytic activity">
    <reaction evidence="1">
        <text>(2E)-4-hydroxy-3-methylbut-2-enyl diphosphate + oxidized [flavodoxin] + H2O + 2 H(+) = 2-C-methyl-D-erythritol 2,4-cyclic diphosphate + reduced [flavodoxin]</text>
        <dbReference type="Rhea" id="RHEA:43604"/>
        <dbReference type="Rhea" id="RHEA-COMP:10622"/>
        <dbReference type="Rhea" id="RHEA-COMP:10623"/>
        <dbReference type="ChEBI" id="CHEBI:15377"/>
        <dbReference type="ChEBI" id="CHEBI:15378"/>
        <dbReference type="ChEBI" id="CHEBI:57618"/>
        <dbReference type="ChEBI" id="CHEBI:58210"/>
        <dbReference type="ChEBI" id="CHEBI:58483"/>
        <dbReference type="ChEBI" id="CHEBI:128753"/>
        <dbReference type="EC" id="1.17.7.3"/>
    </reaction>
</comment>
<comment type="cofactor">
    <cofactor evidence="1">
        <name>[4Fe-4S] cluster</name>
        <dbReference type="ChEBI" id="CHEBI:49883"/>
    </cofactor>
    <text evidence="1">Binds 1 [4Fe-4S] cluster.</text>
</comment>
<comment type="pathway">
    <text evidence="1">Isoprenoid biosynthesis; isopentenyl diphosphate biosynthesis via DXP pathway; isopentenyl diphosphate from 1-deoxy-D-xylulose 5-phosphate: step 5/6.</text>
</comment>
<comment type="similarity">
    <text evidence="1">Belongs to the IspG family.</text>
</comment>
<dbReference type="EC" id="1.17.7.3" evidence="1"/>
<dbReference type="EMBL" id="CP000814">
    <property type="protein sequence ID" value="ABV52253.1"/>
    <property type="molecule type" value="Genomic_DNA"/>
</dbReference>
<dbReference type="RefSeq" id="WP_012006678.1">
    <property type="nucleotide sequence ID" value="NC_009839.1"/>
</dbReference>
<dbReference type="SMR" id="A8FLB6"/>
<dbReference type="KEGG" id="cju:C8J_0654"/>
<dbReference type="HOGENOM" id="CLU_042258_0_0_7"/>
<dbReference type="UniPathway" id="UPA00056">
    <property type="reaction ID" value="UER00096"/>
</dbReference>
<dbReference type="GO" id="GO:0051539">
    <property type="term" value="F:4 iron, 4 sulfur cluster binding"/>
    <property type="evidence" value="ECO:0007669"/>
    <property type="project" value="UniProtKB-UniRule"/>
</dbReference>
<dbReference type="GO" id="GO:0046429">
    <property type="term" value="F:4-hydroxy-3-methylbut-2-en-1-yl diphosphate synthase activity (ferredoxin)"/>
    <property type="evidence" value="ECO:0007669"/>
    <property type="project" value="UniProtKB-UniRule"/>
</dbReference>
<dbReference type="GO" id="GO:0141197">
    <property type="term" value="F:4-hydroxy-3-methylbut-2-enyl-diphosphate synthase activity (flavodoxin)"/>
    <property type="evidence" value="ECO:0007669"/>
    <property type="project" value="UniProtKB-EC"/>
</dbReference>
<dbReference type="GO" id="GO:0005506">
    <property type="term" value="F:iron ion binding"/>
    <property type="evidence" value="ECO:0007669"/>
    <property type="project" value="InterPro"/>
</dbReference>
<dbReference type="GO" id="GO:0019288">
    <property type="term" value="P:isopentenyl diphosphate biosynthetic process, methylerythritol 4-phosphate pathway"/>
    <property type="evidence" value="ECO:0007669"/>
    <property type="project" value="UniProtKB-UniRule"/>
</dbReference>
<dbReference type="GO" id="GO:0016114">
    <property type="term" value="P:terpenoid biosynthetic process"/>
    <property type="evidence" value="ECO:0007669"/>
    <property type="project" value="InterPro"/>
</dbReference>
<dbReference type="FunFam" id="3.20.20.20:FF:000001">
    <property type="entry name" value="4-hydroxy-3-methylbut-2-en-1-yl diphosphate synthase (flavodoxin)"/>
    <property type="match status" value="1"/>
</dbReference>
<dbReference type="Gene3D" id="3.20.20.20">
    <property type="entry name" value="Dihydropteroate synthase-like"/>
    <property type="match status" value="1"/>
</dbReference>
<dbReference type="Gene3D" id="3.30.413.10">
    <property type="entry name" value="Sulfite Reductase Hemoprotein, domain 1"/>
    <property type="match status" value="1"/>
</dbReference>
<dbReference type="HAMAP" id="MF_00159">
    <property type="entry name" value="IspG"/>
    <property type="match status" value="1"/>
</dbReference>
<dbReference type="InterPro" id="IPR011005">
    <property type="entry name" value="Dihydropteroate_synth-like_sf"/>
</dbReference>
<dbReference type="InterPro" id="IPR016425">
    <property type="entry name" value="IspG_bac"/>
</dbReference>
<dbReference type="InterPro" id="IPR004588">
    <property type="entry name" value="IspG_bac-typ"/>
</dbReference>
<dbReference type="InterPro" id="IPR045854">
    <property type="entry name" value="NO2/SO3_Rdtase_4Fe4S_sf"/>
</dbReference>
<dbReference type="NCBIfam" id="TIGR00612">
    <property type="entry name" value="ispG_gcpE"/>
    <property type="match status" value="1"/>
</dbReference>
<dbReference type="NCBIfam" id="NF001540">
    <property type="entry name" value="PRK00366.1"/>
    <property type="match status" value="1"/>
</dbReference>
<dbReference type="PANTHER" id="PTHR30454">
    <property type="entry name" value="4-HYDROXY-3-METHYLBUT-2-EN-1-YL DIPHOSPHATE SYNTHASE"/>
    <property type="match status" value="1"/>
</dbReference>
<dbReference type="PANTHER" id="PTHR30454:SF0">
    <property type="entry name" value="4-HYDROXY-3-METHYLBUT-2-EN-1-YL DIPHOSPHATE SYNTHASE (FERREDOXIN), CHLOROPLASTIC"/>
    <property type="match status" value="1"/>
</dbReference>
<dbReference type="Pfam" id="PF04551">
    <property type="entry name" value="GcpE"/>
    <property type="match status" value="1"/>
</dbReference>
<dbReference type="PIRSF" id="PIRSF004640">
    <property type="entry name" value="IspG"/>
    <property type="match status" value="1"/>
</dbReference>
<dbReference type="SUPFAM" id="SSF51717">
    <property type="entry name" value="Dihydropteroate synthetase-like"/>
    <property type="match status" value="1"/>
</dbReference>
<dbReference type="SUPFAM" id="SSF56014">
    <property type="entry name" value="Nitrite and sulphite reductase 4Fe-4S domain-like"/>
    <property type="match status" value="1"/>
</dbReference>
<organism>
    <name type="scientific">Campylobacter jejuni subsp. jejuni serotype O:6 (strain 81116 / NCTC 11828)</name>
    <dbReference type="NCBI Taxonomy" id="407148"/>
    <lineage>
        <taxon>Bacteria</taxon>
        <taxon>Pseudomonadati</taxon>
        <taxon>Campylobacterota</taxon>
        <taxon>Epsilonproteobacteria</taxon>
        <taxon>Campylobacterales</taxon>
        <taxon>Campylobacteraceae</taxon>
        <taxon>Campylobacter</taxon>
    </lineage>
</organism>